<reference key="1">
    <citation type="journal article" date="1996" name="Eur. J. Biochem.">
        <title>Genetic and biochemical characterization of the Trichoderma reesei hydrophobin HFBI.</title>
        <authorList>
            <person name="Nakari-Setaelae T."/>
            <person name="Aro N."/>
            <person name="Kalkkinen N."/>
            <person name="Alatalo E."/>
            <person name="Penttilae M."/>
        </authorList>
    </citation>
    <scope>NUCLEOTIDE SEQUENCE [GENOMIC DNA]</scope>
    <scope>PROTEIN SEQUENCE OF 68-97</scope>
    <scope>SUBCELLULAR LOCATION</scope>
    <source>
        <strain>ATCC 26921 / CBS 392.92 / QM9414</strain>
    </source>
</reference>
<reference key="2">
    <citation type="journal article" date="2001" name="Appl. Microbiol. Biotechnol.">
        <title>Overproduction, purification, and characterization of the Trichoderma reesei hydrophobin HFBI.</title>
        <authorList>
            <person name="Askolin S."/>
            <person name="Nakari-Setaelae T."/>
            <person name="Tenkanen M."/>
        </authorList>
    </citation>
    <scope>SUBCELLULAR LOCATION</scope>
</reference>
<reference key="3">
    <citation type="journal article" date="2005" name="FEMS Microbiol. Lett.">
        <title>The Trichoderma reesei hydrophobin genes hfb1 and hfb2 have diverse functions in fungal development.</title>
        <authorList>
            <person name="Askolin S."/>
            <person name="Penttilae M."/>
            <person name="Woesten H.A."/>
            <person name="Nakari-Setaelae T."/>
        </authorList>
    </citation>
    <scope>FUNCTION</scope>
    <scope>DISRUPTION PHENOTYPE</scope>
</reference>
<reference evidence="8 9" key="4">
    <citation type="journal article" date="2006" name="Protein Sci.">
        <title>Two crystal structures of Trichoderma reesei hydrophobin HFBI -- the structure of a protein amphiphile with and without detergent interaction.</title>
        <authorList>
            <person name="Hakanpaa J."/>
            <person name="Szilvay G.R."/>
            <person name="Kaljunen H."/>
            <person name="Maksimainen M."/>
            <person name="Linder M."/>
            <person name="Rouvinen J."/>
        </authorList>
    </citation>
    <scope>X-RAY CRYSTALLOGRAPHY (2.1 ANGSTROMS) OF 23-97</scope>
    <scope>DISULFIDE BONDS</scope>
    <scope>SUBUNIT</scope>
</reference>
<gene>
    <name evidence="6" type="primary">hfb1</name>
</gene>
<comment type="function">
    <text evidence="3 7">Aerial growth, conidiation, and dispersal of filamentous fungi in the environment rely upon a capability of their secreting small amphipathic proteins called hydrophobins (HPBs) with low sequence identity. Class I can self-assemble into an outermost layer of rodlet bundles on aerial cell surfaces, conferring cellular hydrophobicity that supports fungal growth, development and dispersal; whereas Class II form highly ordered films at water-air interfaces through intermolecular interactions but contribute nothing to the rodlet structure (Probable). Hbf1 is a class II hydrophobin that has a role in hyphal development and is in particular required for the formation of aerial hyphae (PubMed:16243453).</text>
</comment>
<comment type="subunit">
    <text evidence="4">Homotetramer (PubMed:16882996). Further self-assembles to form highly ordered films at water-air interfaces through intermolecular interactions (PubMed:16882996).</text>
</comment>
<comment type="subcellular location">
    <subcellularLocation>
        <location evidence="2 5">Secreted</location>
        <location evidence="2 5">Cell wall</location>
    </subcellularLocation>
    <subcellularLocation>
        <location evidence="2 5">Secreted</location>
    </subcellularLocation>
    <text evidence="5">Secreted in aqueous environment.</text>
</comment>
<comment type="disruption phenotype">
    <text evidence="3">Leads to wettable and fluffy colonies (PubMed:16243453). Results in thinner hyphae and impairs the formation of aerial hyphae (PubMed:16243453).</text>
</comment>
<comment type="similarity">
    <text evidence="7">Belongs to the cerato-ulmin hydrophobin family.</text>
</comment>
<dbReference type="EMBL" id="Z68124">
    <property type="protein sequence ID" value="CAA92208.1"/>
    <property type="molecule type" value="Genomic_DNA"/>
</dbReference>
<dbReference type="PIR" id="S62621">
    <property type="entry name" value="S62621"/>
</dbReference>
<dbReference type="PIR" id="S62625">
    <property type="entry name" value="S62625"/>
</dbReference>
<dbReference type="PDB" id="2FZ6">
    <property type="method" value="X-ray"/>
    <property type="resolution" value="2.10 A"/>
    <property type="chains" value="A/B/C/D=23-97"/>
</dbReference>
<dbReference type="PDB" id="2GVM">
    <property type="method" value="X-ray"/>
    <property type="resolution" value="2.30 A"/>
    <property type="chains" value="A/B/C/D=23-97"/>
</dbReference>
<dbReference type="PDBsum" id="2FZ6"/>
<dbReference type="PDBsum" id="2GVM"/>
<dbReference type="SMR" id="P52754"/>
<dbReference type="VEuPathDB" id="FungiDB:TrQ_005079"/>
<dbReference type="OMA" id="NICAKTG"/>
<dbReference type="EvolutionaryTrace" id="P52754"/>
<dbReference type="GO" id="GO:0005576">
    <property type="term" value="C:extracellular region"/>
    <property type="evidence" value="ECO:0007669"/>
    <property type="project" value="UniProtKB-SubCell"/>
</dbReference>
<dbReference type="CDD" id="cd23508">
    <property type="entry name" value="hydrophobin_II"/>
    <property type="match status" value="1"/>
</dbReference>
<dbReference type="Gene3D" id="3.20.120.10">
    <property type="entry name" value="Hydrophobin"/>
    <property type="match status" value="1"/>
</dbReference>
<dbReference type="InterPro" id="IPR010636">
    <property type="entry name" value="Cerato-ulmin_hydrophobin"/>
</dbReference>
<dbReference type="InterPro" id="IPR036686">
    <property type="entry name" value="Hydrophobin_sf"/>
</dbReference>
<dbReference type="PANTHER" id="PTHR42341">
    <property type="entry name" value="HYDROPHOBIN"/>
    <property type="match status" value="1"/>
</dbReference>
<dbReference type="PANTHER" id="PTHR42341:SF1">
    <property type="entry name" value="HYDROPHOBIN"/>
    <property type="match status" value="1"/>
</dbReference>
<dbReference type="Pfam" id="PF06766">
    <property type="entry name" value="Hydrophobin_2"/>
    <property type="match status" value="1"/>
</dbReference>
<dbReference type="SUPFAM" id="SSF101751">
    <property type="entry name" value="Hydrophobin II, HfbII"/>
    <property type="match status" value="1"/>
</dbReference>
<keyword id="KW-0002">3D-structure</keyword>
<keyword id="KW-0134">Cell wall</keyword>
<keyword id="KW-0903">Direct protein sequencing</keyword>
<keyword id="KW-1015">Disulfide bond</keyword>
<keyword id="KW-0964">Secreted</keyword>
<keyword id="KW-0732">Signal</keyword>
<accession>P52754</accession>
<organism>
    <name type="scientific">Hypocrea jecorina</name>
    <name type="common">Trichoderma reesei</name>
    <dbReference type="NCBI Taxonomy" id="51453"/>
    <lineage>
        <taxon>Eukaryota</taxon>
        <taxon>Fungi</taxon>
        <taxon>Dikarya</taxon>
        <taxon>Ascomycota</taxon>
        <taxon>Pezizomycotina</taxon>
        <taxon>Sordariomycetes</taxon>
        <taxon>Hypocreomycetidae</taxon>
        <taxon>Hypocreales</taxon>
        <taxon>Hypocreaceae</taxon>
        <taxon>Trichoderma</taxon>
    </lineage>
</organism>
<feature type="signal peptide" evidence="1">
    <location>
        <begin position="1"/>
        <end position="16"/>
    </location>
</feature>
<feature type="propeptide" id="PRO_0000013519">
    <location>
        <begin position="17"/>
        <end position="22"/>
    </location>
</feature>
<feature type="chain" id="PRO_0000013520" description="Class II hydrophobin 1">
    <location>
        <begin position="23"/>
        <end position="97"/>
    </location>
</feature>
<feature type="disulfide bond" evidence="4 8 9">
    <location>
        <begin position="30"/>
        <end position="79"/>
    </location>
</feature>
<feature type="disulfide bond" evidence="4 8 9">
    <location>
        <begin position="40"/>
        <end position="70"/>
    </location>
</feature>
<feature type="disulfide bond" evidence="4 8 9">
    <location>
        <begin position="41"/>
        <end position="53"/>
    </location>
</feature>
<feature type="disulfide bond" evidence="4 8 9">
    <location>
        <begin position="80"/>
        <end position="91"/>
    </location>
</feature>
<feature type="strand" evidence="10">
    <location>
        <begin position="26"/>
        <end position="30"/>
    </location>
</feature>
<feature type="strand" evidence="10">
    <location>
        <begin position="37"/>
        <end position="45"/>
    </location>
</feature>
<feature type="turn" evidence="10">
    <location>
        <begin position="46"/>
        <end position="48"/>
    </location>
</feature>
<feature type="strand" evidence="10">
    <location>
        <begin position="49"/>
        <end position="54"/>
    </location>
</feature>
<feature type="helix" evidence="10">
    <location>
        <begin position="63"/>
        <end position="71"/>
    </location>
</feature>
<feature type="turn" evidence="10">
    <location>
        <begin position="72"/>
        <end position="74"/>
    </location>
</feature>
<feature type="strand" evidence="10">
    <location>
        <begin position="76"/>
        <end position="81"/>
    </location>
</feature>
<feature type="strand" evidence="10">
    <location>
        <begin position="86"/>
        <end position="90"/>
    </location>
</feature>
<sequence>MKFFAIAALFAAAAVAQPLEDRSNGNGNVCPPGLFSNPQCCATQVLGLIGLDCKVPSQNVYDGTDFRNVCAKTGAQPLCCVAPVAGQALLCQTAVGA</sequence>
<proteinExistence type="evidence at protein level"/>
<evidence type="ECO:0000255" key="1"/>
<evidence type="ECO:0000269" key="2">
    <source>
    </source>
</evidence>
<evidence type="ECO:0000269" key="3">
    <source>
    </source>
</evidence>
<evidence type="ECO:0000269" key="4">
    <source>
    </source>
</evidence>
<evidence type="ECO:0000269" key="5">
    <source>
    </source>
</evidence>
<evidence type="ECO:0000303" key="6">
    <source>
    </source>
</evidence>
<evidence type="ECO:0000305" key="7"/>
<evidence type="ECO:0007744" key="8">
    <source>
        <dbReference type="PDB" id="2FZ6"/>
    </source>
</evidence>
<evidence type="ECO:0007744" key="9">
    <source>
        <dbReference type="PDB" id="2GVM"/>
    </source>
</evidence>
<evidence type="ECO:0007829" key="10">
    <source>
        <dbReference type="PDB" id="2FZ6"/>
    </source>
</evidence>
<protein>
    <recommendedName>
        <fullName evidence="6">Class II hydrophobin 1</fullName>
    </recommendedName>
    <alternativeName>
        <fullName evidence="6">Hydrophobin I</fullName>
        <shortName evidence="6">HFBI</shortName>
    </alternativeName>
</protein>
<name>HYP1_HYPJE</name>